<feature type="chain" id="PRO_1000018473" description="Indole-3-glycerol phosphate synthase">
    <location>
        <begin position="1"/>
        <end position="258"/>
    </location>
</feature>
<reference key="1">
    <citation type="submission" date="2006-12" db="EMBL/GenBank/DDBJ databases">
        <title>Complete sequence of Chlorobium phaeobacteroides DSM 266.</title>
        <authorList>
            <consortium name="US DOE Joint Genome Institute"/>
            <person name="Copeland A."/>
            <person name="Lucas S."/>
            <person name="Lapidus A."/>
            <person name="Barry K."/>
            <person name="Detter J.C."/>
            <person name="Glavina del Rio T."/>
            <person name="Hammon N."/>
            <person name="Israni S."/>
            <person name="Pitluck S."/>
            <person name="Goltsman E."/>
            <person name="Schmutz J."/>
            <person name="Larimer F."/>
            <person name="Land M."/>
            <person name="Hauser L."/>
            <person name="Mikhailova N."/>
            <person name="Li T."/>
            <person name="Overmann J."/>
            <person name="Bryant D.A."/>
            <person name="Richardson P."/>
        </authorList>
    </citation>
    <scope>NUCLEOTIDE SEQUENCE [LARGE SCALE GENOMIC DNA]</scope>
    <source>
        <strain>DSM 266 / SMG 266 / 2430</strain>
    </source>
</reference>
<name>TRPC_CHLPD</name>
<protein>
    <recommendedName>
        <fullName evidence="1">Indole-3-glycerol phosphate synthase</fullName>
        <shortName evidence="1">IGPS</shortName>
        <ecNumber evidence="1">4.1.1.48</ecNumber>
    </recommendedName>
</protein>
<organism>
    <name type="scientific">Chlorobium phaeobacteroides (strain DSM 266 / SMG 266 / 2430)</name>
    <dbReference type="NCBI Taxonomy" id="290317"/>
    <lineage>
        <taxon>Bacteria</taxon>
        <taxon>Pseudomonadati</taxon>
        <taxon>Chlorobiota</taxon>
        <taxon>Chlorobiia</taxon>
        <taxon>Chlorobiales</taxon>
        <taxon>Chlorobiaceae</taxon>
        <taxon>Chlorobium/Pelodictyon group</taxon>
        <taxon>Chlorobium</taxon>
    </lineage>
</organism>
<proteinExistence type="inferred from homology"/>
<sequence length="258" mass="29116">MTYLSRILEEKRQAVLALKQQRPLQHYLEQETELSPCRDFQGCLKRSVDRIKLIAEIKKASPSRGLIVSDFKPLEMARRYMDLGASAFSVLTEEVFFQGSPDYLKEVRRAFSLPVLRKDFILDECQIFESRLMGADAILLIVAALDPHQLQDYLDLARQTGLHVLVEVHDHRELDIALNAGSMIIGINNRDLRDFSVNLHTSIKLRPYIPEGIVSVSESGVKTAADAALLDNASFDAVLIGEGLHVSEDLKRVIWTET</sequence>
<keyword id="KW-0028">Amino-acid biosynthesis</keyword>
<keyword id="KW-0057">Aromatic amino acid biosynthesis</keyword>
<keyword id="KW-0210">Decarboxylase</keyword>
<keyword id="KW-0456">Lyase</keyword>
<keyword id="KW-1185">Reference proteome</keyword>
<keyword id="KW-0822">Tryptophan biosynthesis</keyword>
<evidence type="ECO:0000255" key="1">
    <source>
        <dbReference type="HAMAP-Rule" id="MF_00134"/>
    </source>
</evidence>
<gene>
    <name evidence="1" type="primary">trpC</name>
    <name type="ordered locus">Cpha266_0531</name>
</gene>
<dbReference type="EC" id="4.1.1.48" evidence="1"/>
<dbReference type="EMBL" id="CP000492">
    <property type="protein sequence ID" value="ABL64588.1"/>
    <property type="molecule type" value="Genomic_DNA"/>
</dbReference>
<dbReference type="RefSeq" id="WP_011744421.1">
    <property type="nucleotide sequence ID" value="NC_008639.1"/>
</dbReference>
<dbReference type="SMR" id="A1BDW1"/>
<dbReference type="STRING" id="290317.Cpha266_0531"/>
<dbReference type="KEGG" id="cph:Cpha266_0531"/>
<dbReference type="eggNOG" id="COG0134">
    <property type="taxonomic scope" value="Bacteria"/>
</dbReference>
<dbReference type="HOGENOM" id="CLU_034247_2_0_10"/>
<dbReference type="OrthoDB" id="9804217at2"/>
<dbReference type="UniPathway" id="UPA00035">
    <property type="reaction ID" value="UER00043"/>
</dbReference>
<dbReference type="Proteomes" id="UP000008701">
    <property type="component" value="Chromosome"/>
</dbReference>
<dbReference type="GO" id="GO:0004425">
    <property type="term" value="F:indole-3-glycerol-phosphate synthase activity"/>
    <property type="evidence" value="ECO:0007669"/>
    <property type="project" value="UniProtKB-UniRule"/>
</dbReference>
<dbReference type="GO" id="GO:0004640">
    <property type="term" value="F:phosphoribosylanthranilate isomerase activity"/>
    <property type="evidence" value="ECO:0007669"/>
    <property type="project" value="TreeGrafter"/>
</dbReference>
<dbReference type="GO" id="GO:0000162">
    <property type="term" value="P:L-tryptophan biosynthetic process"/>
    <property type="evidence" value="ECO:0007669"/>
    <property type="project" value="UniProtKB-UniRule"/>
</dbReference>
<dbReference type="CDD" id="cd00331">
    <property type="entry name" value="IGPS"/>
    <property type="match status" value="1"/>
</dbReference>
<dbReference type="FunFam" id="3.20.20.70:FF:000024">
    <property type="entry name" value="Indole-3-glycerol phosphate synthase"/>
    <property type="match status" value="1"/>
</dbReference>
<dbReference type="Gene3D" id="3.20.20.70">
    <property type="entry name" value="Aldolase class I"/>
    <property type="match status" value="1"/>
</dbReference>
<dbReference type="HAMAP" id="MF_00134_B">
    <property type="entry name" value="IGPS_B"/>
    <property type="match status" value="1"/>
</dbReference>
<dbReference type="InterPro" id="IPR013785">
    <property type="entry name" value="Aldolase_TIM"/>
</dbReference>
<dbReference type="InterPro" id="IPR045186">
    <property type="entry name" value="Indole-3-glycerol_P_synth"/>
</dbReference>
<dbReference type="InterPro" id="IPR013798">
    <property type="entry name" value="Indole-3-glycerol_P_synth_dom"/>
</dbReference>
<dbReference type="InterPro" id="IPR001468">
    <property type="entry name" value="Indole-3-GlycerolPSynthase_CS"/>
</dbReference>
<dbReference type="InterPro" id="IPR011060">
    <property type="entry name" value="RibuloseP-bd_barrel"/>
</dbReference>
<dbReference type="NCBIfam" id="NF001377">
    <property type="entry name" value="PRK00278.2-4"/>
    <property type="match status" value="1"/>
</dbReference>
<dbReference type="PANTHER" id="PTHR22854:SF2">
    <property type="entry name" value="INDOLE-3-GLYCEROL-PHOSPHATE SYNTHASE"/>
    <property type="match status" value="1"/>
</dbReference>
<dbReference type="PANTHER" id="PTHR22854">
    <property type="entry name" value="TRYPTOPHAN BIOSYNTHESIS PROTEIN"/>
    <property type="match status" value="1"/>
</dbReference>
<dbReference type="Pfam" id="PF00218">
    <property type="entry name" value="IGPS"/>
    <property type="match status" value="1"/>
</dbReference>
<dbReference type="SUPFAM" id="SSF51366">
    <property type="entry name" value="Ribulose-phoshate binding barrel"/>
    <property type="match status" value="1"/>
</dbReference>
<dbReference type="PROSITE" id="PS00614">
    <property type="entry name" value="IGPS"/>
    <property type="match status" value="1"/>
</dbReference>
<accession>A1BDW1</accession>
<comment type="catalytic activity">
    <reaction evidence="1">
        <text>1-(2-carboxyphenylamino)-1-deoxy-D-ribulose 5-phosphate + H(+) = (1S,2R)-1-C-(indol-3-yl)glycerol 3-phosphate + CO2 + H2O</text>
        <dbReference type="Rhea" id="RHEA:23476"/>
        <dbReference type="ChEBI" id="CHEBI:15377"/>
        <dbReference type="ChEBI" id="CHEBI:15378"/>
        <dbReference type="ChEBI" id="CHEBI:16526"/>
        <dbReference type="ChEBI" id="CHEBI:58613"/>
        <dbReference type="ChEBI" id="CHEBI:58866"/>
        <dbReference type="EC" id="4.1.1.48"/>
    </reaction>
</comment>
<comment type="pathway">
    <text evidence="1">Amino-acid biosynthesis; L-tryptophan biosynthesis; L-tryptophan from chorismate: step 4/5.</text>
</comment>
<comment type="similarity">
    <text evidence="1">Belongs to the TrpC family.</text>
</comment>